<name>MAL_HUMAN</name>
<accession>P21145</accession>
<accession>Q6FH77</accession>
<comment type="function">
    <text evidence="1">May be involved in vesicular trafficking from the Golgi apparatus to the cell membrane. Plays a role in the maintenance of the myelin sheath, and in axon-glia and glia-glia interactions.</text>
</comment>
<comment type="subunit">
    <text evidence="4">Interacts with PLP1.</text>
</comment>
<comment type="interaction">
    <interactant intactId="EBI-3932027">
        <id>P21145</id>
    </interactant>
    <interactant intactId="EBI-6423788">
        <id>Q16671</id>
        <label>AMHR2</label>
    </interactant>
    <organismsDiffer>false</organismsDiffer>
    <experiments>3</experiments>
</comment>
<comment type="interaction">
    <interactant intactId="EBI-3932027">
        <id>P21145</id>
    </interactant>
    <interactant intactId="EBI-13059134">
        <id>Q13520</id>
        <label>AQP6</label>
    </interactant>
    <organismsDiffer>false</organismsDiffer>
    <experiments>3</experiments>
</comment>
<comment type="interaction">
    <interactant intactId="EBI-3932027">
        <id>P21145</id>
    </interactant>
    <interactant intactId="EBI-747430">
        <id>Q9BXK5</id>
        <label>BCL2L13</label>
    </interactant>
    <organismsDiffer>false</organismsDiffer>
    <experiments>5</experiments>
</comment>
<comment type="interaction">
    <interactant intactId="EBI-3932027">
        <id>P21145</id>
    </interactant>
    <interactant intactId="EBI-624835">
        <id>Q06187</id>
        <label>BTK</label>
    </interactant>
    <organismsDiffer>false</organismsDiffer>
    <experiments>5</experiments>
</comment>
<comment type="interaction">
    <interactant intactId="EBI-3932027">
        <id>P21145</id>
    </interactant>
    <interactant intactId="EBI-17841208">
        <id>Q7KYR7-4</id>
        <label>BTN2A1</label>
    </interactant>
    <organismsDiffer>false</organismsDiffer>
    <experiments>3</experiments>
</comment>
<comment type="interaction">
    <interactant intactId="EBI-3932027">
        <id>P21145</id>
    </interactant>
    <interactant intactId="EBI-12187137">
        <id>Q9BXU9</id>
        <label>CALN1</label>
    </interactant>
    <organismsDiffer>false</organismsDiffer>
    <experiments>3</experiments>
</comment>
<comment type="interaction">
    <interactant intactId="EBI-3932027">
        <id>P21145</id>
    </interactant>
    <interactant intactId="EBI-10254587">
        <id>Q6UXG3</id>
        <label>CD300LG</label>
    </interactant>
    <organismsDiffer>false</organismsDiffer>
    <experiments>3</experiments>
</comment>
<comment type="interaction">
    <interactant intactId="EBI-3932027">
        <id>P21145</id>
    </interactant>
    <interactant intactId="EBI-3862428">
        <id>P09693</id>
        <label>CD3G</label>
    </interactant>
    <organismsDiffer>false</organismsDiffer>
    <experiments>3</experiments>
</comment>
<comment type="interaction">
    <interactant intactId="EBI-3932027">
        <id>P21145</id>
    </interactant>
    <interactant intactId="EBI-525714">
        <id>P25942</id>
        <label>CD40</label>
    </interactant>
    <organismsDiffer>false</organismsDiffer>
    <experiments>3</experiments>
</comment>
<comment type="interaction">
    <interactant intactId="EBI-3932027">
        <id>P21145</id>
    </interactant>
    <interactant intactId="EBI-6657396">
        <id>P19397</id>
        <label>CD53</label>
    </interactant>
    <organismsDiffer>false</organismsDiffer>
    <experiments>3</experiments>
</comment>
<comment type="interaction">
    <interactant intactId="EBI-3932027">
        <id>P21145</id>
    </interactant>
    <interactant intactId="EBI-2836595">
        <id>Q07108</id>
        <label>CD69</label>
    </interactant>
    <organismsDiffer>false</organismsDiffer>
    <experiments>3</experiments>
</comment>
<comment type="interaction">
    <interactant intactId="EBI-3932027">
        <id>P21145</id>
    </interactant>
    <interactant intactId="EBI-11742599">
        <id>O95500</id>
        <label>CLDN14</label>
    </interactant>
    <organismsDiffer>false</organismsDiffer>
    <experiments>3</experiments>
</comment>
<comment type="interaction">
    <interactant intactId="EBI-3932027">
        <id>P21145</id>
    </interactant>
    <interactant intactId="EBI-23801559">
        <id>P56880</id>
        <label>CLDN20</label>
    </interactant>
    <organismsDiffer>false</organismsDiffer>
    <experiments>3</experiments>
</comment>
<comment type="interaction">
    <interactant intactId="EBI-3932027">
        <id>P21145</id>
    </interactant>
    <interactant intactId="EBI-740744">
        <id>O95471</id>
        <label>CLDN7</label>
    </interactant>
    <organismsDiffer>false</organismsDiffer>
    <experiments>3</experiments>
</comment>
<comment type="interaction">
    <interactant intactId="EBI-3932027">
        <id>P21145</id>
    </interactant>
    <interactant intactId="EBI-18341636">
        <id>O95484</id>
        <label>CLDN9</label>
    </interactant>
    <organismsDiffer>false</organismsDiffer>
    <experiments>3</experiments>
</comment>
<comment type="interaction">
    <interactant intactId="EBI-3932027">
        <id>P21145</id>
    </interactant>
    <interactant intactId="EBI-12913226">
        <id>Q8WTT0</id>
        <label>CLEC4C</label>
    </interactant>
    <organismsDiffer>false</organismsDiffer>
    <experiments>4</experiments>
</comment>
<comment type="interaction">
    <interactant intactId="EBI-3932027">
        <id>P21145</id>
    </interactant>
    <interactant intactId="EBI-11291074">
        <id>Q9BQT9</id>
        <label>CLSTN3</label>
    </interactant>
    <organismsDiffer>false</organismsDiffer>
    <experiments>3</experiments>
</comment>
<comment type="interaction">
    <interactant intactId="EBI-3932027">
        <id>P21145</id>
    </interactant>
    <interactant intactId="EBI-18013275">
        <id>Q7Z7G2</id>
        <label>CPLX4</label>
    </interactant>
    <organismsDiffer>false</organismsDiffer>
    <experiments>3</experiments>
</comment>
<comment type="interaction">
    <interactant intactId="EBI-3932027">
        <id>P21145</id>
    </interactant>
    <interactant intactId="EBI-6942903">
        <id>Q96BA8</id>
        <label>CREB3L1</label>
    </interactant>
    <organismsDiffer>false</organismsDiffer>
    <experiments>3</experiments>
</comment>
<comment type="interaction">
    <interactant intactId="EBI-3932027">
        <id>P21145</id>
    </interactant>
    <interactant intactId="EBI-747931">
        <id>P78310</id>
        <label>CXADR</label>
    </interactant>
    <organismsDiffer>false</organismsDiffer>
    <experiments>3</experiments>
</comment>
<comment type="interaction">
    <interactant intactId="EBI-3932027">
        <id>P21145</id>
    </interactant>
    <interactant intactId="EBI-12808806">
        <id>Q9Y4D2</id>
        <label>DAGLA</label>
    </interactant>
    <organismsDiffer>false</organismsDiffer>
    <experiments>3</experiments>
</comment>
<comment type="interaction">
    <interactant intactId="EBI-3932027">
        <id>P21145</id>
    </interactant>
    <interactant intactId="EBI-529425">
        <id>Q92838</id>
        <label>EDA</label>
    </interactant>
    <organismsDiffer>false</organismsDiffer>
    <experiments>7</experiments>
</comment>
<comment type="interaction">
    <interactant intactId="EBI-3932027">
        <id>P21145</id>
    </interactant>
    <interactant intactId="EBI-4319440">
        <id>P54849</id>
        <label>EMP1</label>
    </interactant>
    <organismsDiffer>false</organismsDiffer>
    <experiments>3</experiments>
</comment>
<comment type="interaction">
    <interactant intactId="EBI-3932027">
        <id>P21145</id>
    </interactant>
    <interactant intactId="EBI-2870359">
        <id>P22794</id>
        <label>EVI2A</label>
    </interactant>
    <organismsDiffer>false</organismsDiffer>
    <experiments>3</experiments>
</comment>
<comment type="interaction">
    <interactant intactId="EBI-3932027">
        <id>P21145</id>
    </interactant>
    <interactant intactId="EBI-18304435">
        <id>Q5JX71</id>
        <label>FAM209A</label>
    </interactant>
    <organismsDiffer>false</organismsDiffer>
    <experiments>3</experiments>
</comment>
<comment type="interaction">
    <interactant intactId="EBI-3932027">
        <id>P21145</id>
    </interactant>
    <interactant intactId="EBI-17263163">
        <id>Q96LA5-2</id>
        <label>FCRL2</label>
    </interactant>
    <organismsDiffer>false</organismsDiffer>
    <experiments>3</experiments>
</comment>
<comment type="interaction">
    <interactant intactId="EBI-3932027">
        <id>P21145</id>
    </interactant>
    <interactant intactId="EBI-10200808">
        <id>Q8N539</id>
        <label>FIBCD1</label>
    </interactant>
    <organismsDiffer>false</organismsDiffer>
    <experiments>6</experiments>
</comment>
<comment type="interaction">
    <interactant intactId="EBI-3932027">
        <id>P21145</id>
    </interactant>
    <interactant intactId="EBI-12142257">
        <id>Q8TBE3</id>
        <label>FNDC9</label>
    </interactant>
    <organismsDiffer>false</organismsDiffer>
    <experiments>3</experiments>
</comment>
<comment type="interaction">
    <interactant intactId="EBI-3932027">
        <id>P21145</id>
    </interactant>
    <interactant intactId="EBI-17458373">
        <id>P48165</id>
        <label>GJA8</label>
    </interactant>
    <organismsDiffer>false</organismsDiffer>
    <experiments>3</experiments>
</comment>
<comment type="interaction">
    <interactant intactId="EBI-3932027">
        <id>P21145</id>
    </interactant>
    <interactant intactId="EBI-17565645">
        <id>P08034</id>
        <label>GJB1</label>
    </interactant>
    <organismsDiffer>false</organismsDiffer>
    <experiments>3</experiments>
</comment>
<comment type="interaction">
    <interactant intactId="EBI-3932027">
        <id>P21145</id>
    </interactant>
    <interactant intactId="EBI-13345167">
        <id>Q8TDT2</id>
        <label>GPR152</label>
    </interactant>
    <organismsDiffer>false</organismsDiffer>
    <experiments>3</experiments>
</comment>
<comment type="interaction">
    <interactant intactId="EBI-3932027">
        <id>P21145</id>
    </interactant>
    <interactant intactId="EBI-1384139">
        <id>Q96CP6</id>
        <label>GRAMD1A</label>
    </interactant>
    <organismsDiffer>false</organismsDiffer>
    <experiments>3</experiments>
</comment>
<comment type="interaction">
    <interactant intactId="EBI-3932027">
        <id>P21145</id>
    </interactant>
    <interactant intactId="EBI-18632127">
        <id>Q6UXU4-2</id>
        <label>GSG1L</label>
    </interactant>
    <organismsDiffer>false</organismsDiffer>
    <experiments>3</experiments>
</comment>
<comment type="interaction">
    <interactant intactId="EBI-3932027">
        <id>P21145</id>
    </interactant>
    <interactant intactId="EBI-11427100">
        <id>P31937</id>
        <label>HIBADH</label>
    </interactant>
    <organismsDiffer>false</organismsDiffer>
    <experiments>3</experiments>
</comment>
<comment type="interaction">
    <interactant intactId="EBI-3932027">
        <id>P21145</id>
    </interactant>
    <interactant intactId="EBI-1031656">
        <id>Q13651</id>
        <label>IL10RA</label>
    </interactant>
    <organismsDiffer>false</organismsDiffer>
    <experiments>3</experiments>
</comment>
<comment type="interaction">
    <interactant intactId="EBI-3932027">
        <id>P21145</id>
    </interactant>
    <interactant intactId="EBI-14022792">
        <id>Q6UXL0</id>
        <label>IL20RB</label>
    </interactant>
    <organismsDiffer>false</organismsDiffer>
    <experiments>3</experiments>
</comment>
<comment type="interaction">
    <interactant intactId="EBI-3932027">
        <id>P21145</id>
    </interactant>
    <interactant intactId="EBI-17244059">
        <id>Q86YT9-2</id>
        <label>JAML</label>
    </interactant>
    <organismsDiffer>false</organismsDiffer>
    <experiments>3</experiments>
</comment>
<comment type="interaction">
    <interactant intactId="EBI-3932027">
        <id>P21145</id>
    </interactant>
    <interactant intactId="EBI-8286599">
        <id>Q09470</id>
        <label>KCNA1</label>
    </interactant>
    <organismsDiffer>false</organismsDiffer>
    <experiments>3</experiments>
</comment>
<comment type="interaction">
    <interactant intactId="EBI-3932027">
        <id>P21145</id>
    </interactant>
    <interactant intactId="EBI-12265328">
        <id>Q16322</id>
        <label>KCNA10</label>
    </interactant>
    <organismsDiffer>false</organismsDiffer>
    <experiments>3</experiments>
</comment>
<comment type="interaction">
    <interactant intactId="EBI-3932027">
        <id>P21145</id>
    </interactant>
    <interactant intactId="EBI-19112227">
        <id>Q86W47</id>
        <label>KCNMB4</label>
    </interactant>
    <organismsDiffer>false</organismsDiffer>
    <experiments>3</experiments>
</comment>
<comment type="interaction">
    <interactant intactId="EBI-3932027">
        <id>P21145</id>
    </interactant>
    <interactant intactId="EBI-9018187">
        <id>P26715</id>
        <label>KLRC1</label>
    </interactant>
    <organismsDiffer>false</organismsDiffer>
    <experiments>6</experiments>
</comment>
<comment type="interaction">
    <interactant intactId="EBI-3932027">
        <id>P21145</id>
    </interactant>
    <interactant intactId="EBI-10173166">
        <id>Q5T700</id>
        <label>LDLRAD1</label>
    </interactant>
    <organismsDiffer>false</organismsDiffer>
    <experiments>7</experiments>
</comment>
<comment type="interaction">
    <interactant intactId="EBI-3932027">
        <id>P21145</id>
    </interactant>
    <interactant intactId="EBI-9091707">
        <id>Q9H0V9</id>
        <label>LMAN2L</label>
    </interactant>
    <organismsDiffer>false</organismsDiffer>
    <experiments>3</experiments>
</comment>
<comment type="interaction">
    <interactant intactId="EBI-3932027">
        <id>P21145</id>
    </interactant>
    <interactant intactId="EBI-11304917">
        <id>Q8N386</id>
        <label>LRRC25</label>
    </interactant>
    <organismsDiffer>false</organismsDiffer>
    <experiments>3</experiments>
</comment>
<comment type="interaction">
    <interactant intactId="EBI-3932027">
        <id>P21145</id>
    </interactant>
    <interactant intactId="EBI-12825005">
        <id>Q9HBL6</id>
        <label>LRTM1</label>
    </interactant>
    <organismsDiffer>false</organismsDiffer>
    <experiments>3</experiments>
</comment>
<comment type="interaction">
    <interactant intactId="EBI-3932027">
        <id>P21145</id>
    </interactant>
    <interactant intactId="EBI-10200825">
        <id>Q8N8F7</id>
        <label>LSMEM1</label>
    </interactant>
    <organismsDiffer>false</organismsDiffer>
    <experiments>3</experiments>
</comment>
<comment type="interaction">
    <interactant intactId="EBI-3932027">
        <id>P21145</id>
    </interactant>
    <interactant intactId="EBI-12820341">
        <id>Q96JQ5</id>
        <label>MS4A4A</label>
    </interactant>
    <organismsDiffer>false</organismsDiffer>
    <experiments>3</experiments>
</comment>
<comment type="interaction">
    <interactant intactId="EBI-3932027">
        <id>P21145</id>
    </interactant>
    <interactant intactId="EBI-10247000">
        <id>Q6IBW4-4</id>
        <label>NCAPH2</label>
    </interactant>
    <organismsDiffer>false</organismsDiffer>
    <experiments>3</experiments>
</comment>
<comment type="interaction">
    <interactant intactId="EBI-3932027">
        <id>P21145</id>
    </interactant>
    <interactant intactId="EBI-17791123">
        <id>Q8IVV8</id>
        <label>NKAIN4</label>
    </interactant>
    <organismsDiffer>false</organismsDiffer>
    <experiments>3</experiments>
</comment>
<comment type="interaction">
    <interactant intactId="EBI-3932027">
        <id>P21145</id>
    </interactant>
    <interactant intactId="EBI-748927">
        <id>Q9NQX5</id>
        <label>NPDC1</label>
    </interactant>
    <organismsDiffer>false</organismsDiffer>
    <experiments>3</experiments>
</comment>
<comment type="interaction">
    <interactant intactId="EBI-3932027">
        <id>P21145</id>
    </interactant>
    <interactant intactId="EBI-12807478">
        <id>P35372-10</id>
        <label>OPRM1</label>
    </interactant>
    <organismsDiffer>false</organismsDiffer>
    <experiments>3</experiments>
</comment>
<comment type="interaction">
    <interactant intactId="EBI-3932027">
        <id>P21145</id>
    </interactant>
    <interactant intactId="EBI-17183069">
        <id>Q96FX8</id>
        <label>PERP</label>
    </interactant>
    <organismsDiffer>false</organismsDiffer>
    <experiments>3</experiments>
</comment>
<comment type="interaction">
    <interactant intactId="EBI-3932027">
        <id>P21145</id>
    </interactant>
    <interactant intactId="EBI-726466">
        <id>O15496</id>
        <label>PLA2G10</label>
    </interactant>
    <organismsDiffer>false</organismsDiffer>
    <experiments>3</experiments>
</comment>
<comment type="interaction">
    <interactant intactId="EBI-3932027">
        <id>P21145</id>
    </interactant>
    <interactant intactId="EBI-12211089">
        <id>Q99946-2</id>
        <label>PRRT1</label>
    </interactant>
    <organismsDiffer>false</organismsDiffer>
    <experiments>3</experiments>
</comment>
<comment type="interaction">
    <interactant intactId="EBI-3932027">
        <id>P21145</id>
    </interactant>
    <interactant intactId="EBI-10200782">
        <id>Q16849-3</id>
        <label>PTPRN</label>
    </interactant>
    <organismsDiffer>false</organismsDiffer>
    <experiments>3</experiments>
</comment>
<comment type="interaction">
    <interactant intactId="EBI-3932027">
        <id>P21145</id>
    </interactant>
    <interactant intactId="EBI-962893">
        <id>O60894</id>
        <label>RAMP1</label>
    </interactant>
    <organismsDiffer>false</organismsDiffer>
    <experiments>3</experiments>
</comment>
<comment type="interaction">
    <interactant intactId="EBI-3932027">
        <id>P21145</id>
    </interactant>
    <interactant intactId="EBI-3913237">
        <id>P31431</id>
        <label>SDC4</label>
    </interactant>
    <organismsDiffer>false</organismsDiffer>
    <experiments>3</experiments>
</comment>
<comment type="interaction">
    <interactant intactId="EBI-3932027">
        <id>P21145</id>
    </interactant>
    <interactant intactId="EBI-5663627">
        <id>Q16585</id>
        <label>SGCB</label>
    </interactant>
    <organismsDiffer>false</organismsDiffer>
    <experiments>3</experiments>
</comment>
<comment type="interaction">
    <interactant intactId="EBI-3932027">
        <id>P21145</id>
    </interactant>
    <interactant intactId="EBI-10171518">
        <id>A0PJX4</id>
        <label>SHISA3</label>
    </interactant>
    <organismsDiffer>false</organismsDiffer>
    <experiments>3</experiments>
</comment>
<comment type="interaction">
    <interactant intactId="EBI-3932027">
        <id>P21145</id>
    </interactant>
    <interactant intactId="EBI-18035902">
        <id>Q96DD7</id>
        <label>SHISA4</label>
    </interactant>
    <organismsDiffer>false</organismsDiffer>
    <experiments>3</experiments>
</comment>
<comment type="interaction">
    <interactant intactId="EBI-3932027">
        <id>P21145</id>
    </interactant>
    <interactant intactId="EBI-3923031">
        <id>Q14973</id>
        <label>SLC10A1</label>
    </interactant>
    <organismsDiffer>false</organismsDiffer>
    <experiments>3</experiments>
</comment>
<comment type="interaction">
    <interactant intactId="EBI-3932027">
        <id>P21145</id>
    </interactant>
    <interactant intactId="EBI-17295964">
        <id>Q9NQQ7-3</id>
        <label>SLC35C2</label>
    </interactant>
    <organismsDiffer>false</organismsDiffer>
    <experiments>3</experiments>
</comment>
<comment type="interaction">
    <interactant intactId="EBI-3932027">
        <id>P21145</id>
    </interactant>
    <interactant intactId="EBI-741850">
        <id>Q9BZL3</id>
        <label>SMIM3</label>
    </interactant>
    <organismsDiffer>false</organismsDiffer>
    <experiments>6</experiments>
</comment>
<comment type="interaction">
    <interactant intactId="EBI-3932027">
        <id>P21145</id>
    </interactant>
    <interactant intactId="EBI-12078338">
        <id>O43278-2</id>
        <label>SPINT1</label>
    </interactant>
    <organismsDiffer>false</organismsDiffer>
    <experiments>3</experiments>
</comment>
<comment type="interaction">
    <interactant intactId="EBI-3932027">
        <id>P21145</id>
    </interactant>
    <interactant intactId="EBI-712466">
        <id>Q16623</id>
        <label>STX1A</label>
    </interactant>
    <organismsDiffer>false</organismsDiffer>
    <experiments>4</experiments>
</comment>
<comment type="interaction">
    <interactant intactId="EBI-3932027">
        <id>P21145</id>
    </interactant>
    <interactant intactId="EBI-726331">
        <id>Q9H7V2</id>
        <label>SYNDIG1</label>
    </interactant>
    <organismsDiffer>false</organismsDiffer>
    <experiments>3</experiments>
</comment>
<comment type="interaction">
    <interactant intactId="EBI-3932027">
        <id>P21145</id>
    </interactant>
    <interactant intactId="EBI-19027521">
        <id>Q8N6K0</id>
        <label>TEX29</label>
    </interactant>
    <organismsDiffer>false</organismsDiffer>
    <experiments>3</experiments>
</comment>
<comment type="interaction">
    <interactant intactId="EBI-3932027">
        <id>P21145</id>
    </interactant>
    <interactant intactId="EBI-4314807">
        <id>Q495A1</id>
        <label>TIGIT</label>
    </interactant>
    <organismsDiffer>false</organismsDiffer>
    <experiments>3</experiments>
</comment>
<comment type="interaction">
    <interactant intactId="EBI-3932027">
        <id>P21145</id>
    </interactant>
    <interactant intactId="EBI-13351685">
        <id>Q96CE8</id>
        <label>TM4SF18</label>
    </interactant>
    <organismsDiffer>false</organismsDiffer>
    <experiments>3</experiments>
</comment>
<comment type="interaction">
    <interactant intactId="EBI-3932027">
        <id>P21145</id>
    </interactant>
    <interactant intactId="EBI-2821497">
        <id>Q9BVX2</id>
        <label>TMEM106C</label>
    </interactant>
    <organismsDiffer>false</organismsDiffer>
    <experiments>3</experiments>
</comment>
<comment type="interaction">
    <interactant intactId="EBI-3932027">
        <id>P21145</id>
    </interactant>
    <interactant intactId="EBI-10276729">
        <id>Q8WUU8</id>
        <label>TMEM174</label>
    </interactant>
    <organismsDiffer>false</organismsDiffer>
    <experiments>3</experiments>
</comment>
<comment type="interaction">
    <interactant intactId="EBI-3932027">
        <id>P21145</id>
    </interactant>
    <interactant intactId="EBI-13301303">
        <id>Q6UWW9</id>
        <label>TMEM207</label>
    </interactant>
    <organismsDiffer>false</organismsDiffer>
    <experiments>3</experiments>
</comment>
<comment type="interaction">
    <interactant intactId="EBI-3932027">
        <id>P21145</id>
    </interactant>
    <interactant intactId="EBI-10314986">
        <id>Q9NWD8</id>
        <label>TMEM248</label>
    </interactant>
    <organismsDiffer>false</organismsDiffer>
    <experiments>3</experiments>
</comment>
<comment type="interaction">
    <interactant intactId="EBI-3932027">
        <id>P21145</id>
    </interactant>
    <interactant intactId="EBI-12921610">
        <id>Q9NV96-2</id>
        <label>TMEM30A</label>
    </interactant>
    <organismsDiffer>false</organismsDiffer>
    <experiments>3</experiments>
</comment>
<comment type="interaction">
    <interactant intactId="EBI-3932027">
        <id>P21145</id>
    </interactant>
    <interactant intactId="EBI-18178701">
        <id>Q4KMG9</id>
        <label>TMEM52B</label>
    </interactant>
    <organismsDiffer>false</organismsDiffer>
    <experiments>3</experiments>
</comment>
<comment type="interaction">
    <interactant intactId="EBI-3932027">
        <id>P21145</id>
    </interactant>
    <interactant intactId="EBI-524131">
        <id>O43557</id>
        <label>TNFSF14</label>
    </interactant>
    <organismsDiffer>false</organismsDiffer>
    <experiments>5</experiments>
</comment>
<comment type="interaction">
    <interactant intactId="EBI-3932027">
        <id>P21145</id>
    </interactant>
    <interactant intactId="EBI-12195249">
        <id>Q5TGU0</id>
        <label>TSPO2</label>
    </interactant>
    <organismsDiffer>false</organismsDiffer>
    <experiments>3</experiments>
</comment>
<comment type="interaction">
    <interactant intactId="EBI-3932027">
        <id>P21145</id>
    </interactant>
    <interactant intactId="EBI-302474">
        <id>Q93009</id>
        <label>USP7</label>
    </interactant>
    <organismsDiffer>false</organismsDiffer>
    <experiments>3</experiments>
</comment>
<comment type="subcellular location">
    <subcellularLocation>
        <location>Membrane</location>
        <topology>Multi-pass membrane protein</topology>
    </subcellularLocation>
    <subcellularLocation>
        <location evidence="4">Cell membrane</location>
    </subcellularLocation>
    <text evidence="1">Found in lipid rafts.</text>
</comment>
<comment type="alternative products">
    <event type="alternative splicing"/>
    <isoform>
        <id>P21145-1</id>
        <name>A</name>
        <sequence type="displayed"/>
    </isoform>
    <isoform>
        <id>P21145-2</id>
        <name>B</name>
        <sequence type="described" ref="VSP_003164"/>
    </isoform>
    <isoform>
        <id>P21145-3</id>
        <name>C</name>
        <sequence type="described" ref="VSP_003163"/>
    </isoform>
    <isoform>
        <id>P21145-4</id>
        <name>D</name>
        <sequence type="described" ref="VSP_003162"/>
    </isoform>
</comment>
<comment type="developmental stage">
    <text>Expressed in the intermediate and late stages of T-cell differentiation.</text>
</comment>
<comment type="PTM">
    <text>Lipoprotein.</text>
</comment>
<comment type="disease" evidence="4">
    <disease id="DI-06956">
        <name>Leukodystrophy, hypomyelinating, 28</name>
        <acronym>HLD28</acronym>
        <description>A form of hypomyelinating leukodystrophy, a group of heterogeneous disorders characterized by persistent deficit of myelin observed on brain imaging. HLD28 is an autosomal recessive form characterized by developmental delay and nystagmus in infancy, followed by significant learning disabilities and progressive motor deterioration within the first decade.</description>
        <dbReference type="MIM" id="620978"/>
    </disease>
    <text>The disease may be caused by variants affecting the gene represented in this entry.</text>
</comment>
<comment type="similarity">
    <text evidence="5">Belongs to the MAL family.</text>
</comment>
<comment type="online information" name="Atlas of Genetics and Cytogenetics in Oncology and Haematology">
    <link uri="https://atlasgeneticsoncology.org/gene/46222/MAL"/>
</comment>
<keyword id="KW-0025">Alternative splicing</keyword>
<keyword id="KW-1003">Cell membrane</keyword>
<keyword id="KW-1026">Leukodystrophy</keyword>
<keyword id="KW-0449">Lipoprotein</keyword>
<keyword id="KW-0472">Membrane</keyword>
<keyword id="KW-1267">Proteomics identification</keyword>
<keyword id="KW-1185">Reference proteome</keyword>
<keyword id="KW-0812">Transmembrane</keyword>
<keyword id="KW-1133">Transmembrane helix</keyword>
<reference key="1">
    <citation type="journal article" date="1987" name="Proc. Natl. Acad. Sci. U.S.A.">
        <title>cDNA cloning and sequence of MAL, a hydrophobic protein associated with human T-cell differentiation.</title>
        <authorList>
            <person name="Alonso M.A."/>
            <person name="Weissman S.M."/>
        </authorList>
    </citation>
    <scope>NUCLEOTIDE SEQUENCE [MRNA]</scope>
</reference>
<reference key="2">
    <citation type="journal article" date="1994" name="Genomics">
        <title>Alternative splicing of human T-cell-specific MAL mRNA and its correlation with the exon/intron organization of the gene.</title>
        <authorList>
            <person name="Rancano C."/>
            <person name="Rubio T."/>
            <person name="Alonso M.A."/>
        </authorList>
    </citation>
    <scope>NUCLEOTIDE SEQUENCE [GENOMIC DNA / MRNA]</scope>
</reference>
<reference key="3">
    <citation type="journal article" date="1994" name="J. Biol. Chem.">
        <title>Genomic structure and subcellular localization of MAL, a human T-cell-specific proteolipid protein.</title>
        <authorList>
            <person name="Rancano C."/>
            <person name="Rubio T."/>
            <person name="Correas I."/>
            <person name="Alonso M.A."/>
        </authorList>
    </citation>
    <scope>NUCLEOTIDE SEQUENCE [GENOMIC DNA]</scope>
    <source>
        <tissue>Lymphocyte</tissue>
        <tissue>Placenta</tissue>
    </source>
</reference>
<reference key="4">
    <citation type="journal article" date="2004" name="Nat. Genet.">
        <title>Complete sequencing and characterization of 21,243 full-length human cDNAs.</title>
        <authorList>
            <person name="Ota T."/>
            <person name="Suzuki Y."/>
            <person name="Nishikawa T."/>
            <person name="Otsuki T."/>
            <person name="Sugiyama T."/>
            <person name="Irie R."/>
            <person name="Wakamatsu A."/>
            <person name="Hayashi K."/>
            <person name="Sato H."/>
            <person name="Nagai K."/>
            <person name="Kimura K."/>
            <person name="Makita H."/>
            <person name="Sekine M."/>
            <person name="Obayashi M."/>
            <person name="Nishi T."/>
            <person name="Shibahara T."/>
            <person name="Tanaka T."/>
            <person name="Ishii S."/>
            <person name="Yamamoto J."/>
            <person name="Saito K."/>
            <person name="Kawai Y."/>
            <person name="Isono Y."/>
            <person name="Nakamura Y."/>
            <person name="Nagahari K."/>
            <person name="Murakami K."/>
            <person name="Yasuda T."/>
            <person name="Iwayanagi T."/>
            <person name="Wagatsuma M."/>
            <person name="Shiratori A."/>
            <person name="Sudo H."/>
            <person name="Hosoiri T."/>
            <person name="Kaku Y."/>
            <person name="Kodaira H."/>
            <person name="Kondo H."/>
            <person name="Sugawara M."/>
            <person name="Takahashi M."/>
            <person name="Kanda K."/>
            <person name="Yokoi T."/>
            <person name="Furuya T."/>
            <person name="Kikkawa E."/>
            <person name="Omura Y."/>
            <person name="Abe K."/>
            <person name="Kamihara K."/>
            <person name="Katsuta N."/>
            <person name="Sato K."/>
            <person name="Tanikawa M."/>
            <person name="Yamazaki M."/>
            <person name="Ninomiya K."/>
            <person name="Ishibashi T."/>
            <person name="Yamashita H."/>
            <person name="Murakawa K."/>
            <person name="Fujimori K."/>
            <person name="Tanai H."/>
            <person name="Kimata M."/>
            <person name="Watanabe M."/>
            <person name="Hiraoka S."/>
            <person name="Chiba Y."/>
            <person name="Ishida S."/>
            <person name="Ono Y."/>
            <person name="Takiguchi S."/>
            <person name="Watanabe S."/>
            <person name="Yosida M."/>
            <person name="Hotuta T."/>
            <person name="Kusano J."/>
            <person name="Kanehori K."/>
            <person name="Takahashi-Fujii A."/>
            <person name="Hara H."/>
            <person name="Tanase T.-O."/>
            <person name="Nomura Y."/>
            <person name="Togiya S."/>
            <person name="Komai F."/>
            <person name="Hara R."/>
            <person name="Takeuchi K."/>
            <person name="Arita M."/>
            <person name="Imose N."/>
            <person name="Musashino K."/>
            <person name="Yuuki H."/>
            <person name="Oshima A."/>
            <person name="Sasaki N."/>
            <person name="Aotsuka S."/>
            <person name="Yoshikawa Y."/>
            <person name="Matsunawa H."/>
            <person name="Ichihara T."/>
            <person name="Shiohata N."/>
            <person name="Sano S."/>
            <person name="Moriya S."/>
            <person name="Momiyama H."/>
            <person name="Satoh N."/>
            <person name="Takami S."/>
            <person name="Terashima Y."/>
            <person name="Suzuki O."/>
            <person name="Nakagawa S."/>
            <person name="Senoh A."/>
            <person name="Mizoguchi H."/>
            <person name="Goto Y."/>
            <person name="Shimizu F."/>
            <person name="Wakebe H."/>
            <person name="Hishigaki H."/>
            <person name="Watanabe T."/>
            <person name="Sugiyama A."/>
            <person name="Takemoto M."/>
            <person name="Kawakami B."/>
            <person name="Yamazaki M."/>
            <person name="Watanabe K."/>
            <person name="Kumagai A."/>
            <person name="Itakura S."/>
            <person name="Fukuzumi Y."/>
            <person name="Fujimori Y."/>
            <person name="Komiyama M."/>
            <person name="Tashiro H."/>
            <person name="Tanigami A."/>
            <person name="Fujiwara T."/>
            <person name="Ono T."/>
            <person name="Yamada K."/>
            <person name="Fujii Y."/>
            <person name="Ozaki K."/>
            <person name="Hirao M."/>
            <person name="Ohmori Y."/>
            <person name="Kawabata A."/>
            <person name="Hikiji T."/>
            <person name="Kobatake N."/>
            <person name="Inagaki H."/>
            <person name="Ikema Y."/>
            <person name="Okamoto S."/>
            <person name="Okitani R."/>
            <person name="Kawakami T."/>
            <person name="Noguchi S."/>
            <person name="Itoh T."/>
            <person name="Shigeta K."/>
            <person name="Senba T."/>
            <person name="Matsumura K."/>
            <person name="Nakajima Y."/>
            <person name="Mizuno T."/>
            <person name="Morinaga M."/>
            <person name="Sasaki M."/>
            <person name="Togashi T."/>
            <person name="Oyama M."/>
            <person name="Hata H."/>
            <person name="Watanabe M."/>
            <person name="Komatsu T."/>
            <person name="Mizushima-Sugano J."/>
            <person name="Satoh T."/>
            <person name="Shirai Y."/>
            <person name="Takahashi Y."/>
            <person name="Nakagawa K."/>
            <person name="Okumura K."/>
            <person name="Nagase T."/>
            <person name="Nomura N."/>
            <person name="Kikuchi H."/>
            <person name="Masuho Y."/>
            <person name="Yamashita R."/>
            <person name="Nakai K."/>
            <person name="Yada T."/>
            <person name="Nakamura Y."/>
            <person name="Ohara O."/>
            <person name="Isogai T."/>
            <person name="Sugano S."/>
        </authorList>
    </citation>
    <scope>NUCLEOTIDE SEQUENCE [LARGE SCALE MRNA]</scope>
    <source>
        <tissue>Brain</tissue>
    </source>
</reference>
<reference key="5">
    <citation type="submission" date="2004-06" db="EMBL/GenBank/DDBJ databases">
        <title>Cloning of human full open reading frames in Gateway(TM) system entry vector (pDONR201).</title>
        <authorList>
            <person name="Ebert L."/>
            <person name="Schick M."/>
            <person name="Neubert P."/>
            <person name="Schatten R."/>
            <person name="Henze S."/>
            <person name="Korn B."/>
        </authorList>
    </citation>
    <scope>NUCLEOTIDE SEQUENCE [LARGE SCALE MRNA]</scope>
</reference>
<reference key="6">
    <citation type="journal article" date="2005" name="Nature">
        <title>Generation and annotation of the DNA sequences of human chromosomes 2 and 4.</title>
        <authorList>
            <person name="Hillier L.W."/>
            <person name="Graves T.A."/>
            <person name="Fulton R.S."/>
            <person name="Fulton L.A."/>
            <person name="Pepin K.H."/>
            <person name="Minx P."/>
            <person name="Wagner-McPherson C."/>
            <person name="Layman D."/>
            <person name="Wylie K."/>
            <person name="Sekhon M."/>
            <person name="Becker M.C."/>
            <person name="Fewell G.A."/>
            <person name="Delehaunty K.D."/>
            <person name="Miner T.L."/>
            <person name="Nash W.E."/>
            <person name="Kremitzki C."/>
            <person name="Oddy L."/>
            <person name="Du H."/>
            <person name="Sun H."/>
            <person name="Bradshaw-Cordum H."/>
            <person name="Ali J."/>
            <person name="Carter J."/>
            <person name="Cordes M."/>
            <person name="Harris A."/>
            <person name="Isak A."/>
            <person name="van Brunt A."/>
            <person name="Nguyen C."/>
            <person name="Du F."/>
            <person name="Courtney L."/>
            <person name="Kalicki J."/>
            <person name="Ozersky P."/>
            <person name="Abbott S."/>
            <person name="Armstrong J."/>
            <person name="Belter E.A."/>
            <person name="Caruso L."/>
            <person name="Cedroni M."/>
            <person name="Cotton M."/>
            <person name="Davidson T."/>
            <person name="Desai A."/>
            <person name="Elliott G."/>
            <person name="Erb T."/>
            <person name="Fronick C."/>
            <person name="Gaige T."/>
            <person name="Haakenson W."/>
            <person name="Haglund K."/>
            <person name="Holmes A."/>
            <person name="Harkins R."/>
            <person name="Kim K."/>
            <person name="Kruchowski S.S."/>
            <person name="Strong C.M."/>
            <person name="Grewal N."/>
            <person name="Goyea E."/>
            <person name="Hou S."/>
            <person name="Levy A."/>
            <person name="Martinka S."/>
            <person name="Mead K."/>
            <person name="McLellan M.D."/>
            <person name="Meyer R."/>
            <person name="Randall-Maher J."/>
            <person name="Tomlinson C."/>
            <person name="Dauphin-Kohlberg S."/>
            <person name="Kozlowicz-Reilly A."/>
            <person name="Shah N."/>
            <person name="Swearengen-Shahid S."/>
            <person name="Snider J."/>
            <person name="Strong J.T."/>
            <person name="Thompson J."/>
            <person name="Yoakum M."/>
            <person name="Leonard S."/>
            <person name="Pearman C."/>
            <person name="Trani L."/>
            <person name="Radionenko M."/>
            <person name="Waligorski J.E."/>
            <person name="Wang C."/>
            <person name="Rock S.M."/>
            <person name="Tin-Wollam A.-M."/>
            <person name="Maupin R."/>
            <person name="Latreille P."/>
            <person name="Wendl M.C."/>
            <person name="Yang S.-P."/>
            <person name="Pohl C."/>
            <person name="Wallis J.W."/>
            <person name="Spieth J."/>
            <person name="Bieri T.A."/>
            <person name="Berkowicz N."/>
            <person name="Nelson J.O."/>
            <person name="Osborne J."/>
            <person name="Ding L."/>
            <person name="Meyer R."/>
            <person name="Sabo A."/>
            <person name="Shotland Y."/>
            <person name="Sinha P."/>
            <person name="Wohldmann P.E."/>
            <person name="Cook L.L."/>
            <person name="Hickenbotham M.T."/>
            <person name="Eldred J."/>
            <person name="Williams D."/>
            <person name="Jones T.A."/>
            <person name="She X."/>
            <person name="Ciccarelli F.D."/>
            <person name="Izaurralde E."/>
            <person name="Taylor J."/>
            <person name="Schmutz J."/>
            <person name="Myers R.M."/>
            <person name="Cox D.R."/>
            <person name="Huang X."/>
            <person name="McPherson J.D."/>
            <person name="Mardis E.R."/>
            <person name="Clifton S.W."/>
            <person name="Warren W.C."/>
            <person name="Chinwalla A.T."/>
            <person name="Eddy S.R."/>
            <person name="Marra M.A."/>
            <person name="Ovcharenko I."/>
            <person name="Furey T.S."/>
            <person name="Miller W."/>
            <person name="Eichler E.E."/>
            <person name="Bork P."/>
            <person name="Suyama M."/>
            <person name="Torrents D."/>
            <person name="Waterston R.H."/>
            <person name="Wilson R.K."/>
        </authorList>
    </citation>
    <scope>NUCLEOTIDE SEQUENCE [LARGE SCALE GENOMIC DNA]</scope>
</reference>
<reference key="7">
    <citation type="submission" date="2005-07" db="EMBL/GenBank/DDBJ databases">
        <authorList>
            <person name="Mural R.J."/>
            <person name="Istrail S."/>
            <person name="Sutton G."/>
            <person name="Florea L."/>
            <person name="Halpern A.L."/>
            <person name="Mobarry C.M."/>
            <person name="Lippert R."/>
            <person name="Walenz B."/>
            <person name="Shatkay H."/>
            <person name="Dew I."/>
            <person name="Miller J.R."/>
            <person name="Flanigan M.J."/>
            <person name="Edwards N.J."/>
            <person name="Bolanos R."/>
            <person name="Fasulo D."/>
            <person name="Halldorsson B.V."/>
            <person name="Hannenhalli S."/>
            <person name="Turner R."/>
            <person name="Yooseph S."/>
            <person name="Lu F."/>
            <person name="Nusskern D.R."/>
            <person name="Shue B.C."/>
            <person name="Zheng X.H."/>
            <person name="Zhong F."/>
            <person name="Delcher A.L."/>
            <person name="Huson D.H."/>
            <person name="Kravitz S.A."/>
            <person name="Mouchard L."/>
            <person name="Reinert K."/>
            <person name="Remington K.A."/>
            <person name="Clark A.G."/>
            <person name="Waterman M.S."/>
            <person name="Eichler E.E."/>
            <person name="Adams M.D."/>
            <person name="Hunkapiller M.W."/>
            <person name="Myers E.W."/>
            <person name="Venter J.C."/>
        </authorList>
    </citation>
    <scope>NUCLEOTIDE SEQUENCE [LARGE SCALE GENOMIC DNA]</scope>
</reference>
<reference key="8">
    <citation type="journal article" date="2004" name="Genome Res.">
        <title>The status, quality, and expansion of the NIH full-length cDNA project: the Mammalian Gene Collection (MGC).</title>
        <authorList>
            <consortium name="The MGC Project Team"/>
        </authorList>
    </citation>
    <scope>NUCLEOTIDE SEQUENCE [LARGE SCALE MRNA]</scope>
    <source>
        <tissue>Lung</tissue>
    </source>
</reference>
<reference key="9">
    <citation type="journal article" date="2022" name="Eur. J. Hum. Genet.">
        <title>Missense mutation of MAL causes a rare leukodystrophy similar to Pelizaeus-Merzbacher disease.</title>
        <authorList>
            <person name="Elpidorou M."/>
            <person name="Poulter J.A."/>
            <person name="Szymanska K."/>
            <person name="Baron W."/>
            <person name="Junger K."/>
            <person name="Boldt K."/>
            <person name="Ueffing M."/>
            <person name="Green L."/>
            <person name="Livingston J.H."/>
            <person name="Sheridan E.G."/>
            <person name="Johnson C.A."/>
        </authorList>
    </citation>
    <scope>VARIANT HLD28 ASP-109</scope>
    <scope>INVOLVEMENT IN HLD28</scope>
    <scope>CHARACTERIZATION OF HLD28 ASP-109</scope>
    <scope>INTERACTION WITH PLP1</scope>
    <scope>SUBCELLULAR LOCATION</scope>
</reference>
<dbReference type="EMBL" id="M15800">
    <property type="protein sequence ID" value="AAA36196.1"/>
    <property type="molecule type" value="mRNA"/>
</dbReference>
<dbReference type="EMBL" id="X76678">
    <property type="protein sequence ID" value="CAA54100.1"/>
    <property type="molecule type" value="mRNA"/>
</dbReference>
<dbReference type="EMBL" id="X76679">
    <property type="protein sequence ID" value="CAA54101.1"/>
    <property type="molecule type" value="mRNA"/>
</dbReference>
<dbReference type="EMBL" id="X76680">
    <property type="protein sequence ID" value="CAA54102.1"/>
    <property type="molecule type" value="mRNA"/>
</dbReference>
<dbReference type="EMBL" id="X76681">
    <property type="protein sequence ID" value="CAA54103.1"/>
    <property type="molecule type" value="mRNA"/>
</dbReference>
<dbReference type="EMBL" id="X76220">
    <property type="protein sequence ID" value="CAA53809.1"/>
    <property type="molecule type" value="Genomic_DNA"/>
</dbReference>
<dbReference type="EMBL" id="X76221">
    <property type="protein sequence ID" value="CAA53809.1"/>
    <property type="status" value="JOINED"/>
    <property type="molecule type" value="Genomic_DNA"/>
</dbReference>
<dbReference type="EMBL" id="X76222">
    <property type="protein sequence ID" value="CAA53809.1"/>
    <property type="status" value="JOINED"/>
    <property type="molecule type" value="Genomic_DNA"/>
</dbReference>
<dbReference type="EMBL" id="X76223">
    <property type="protein sequence ID" value="CAA53809.1"/>
    <property type="status" value="JOINED"/>
    <property type="molecule type" value="Genomic_DNA"/>
</dbReference>
<dbReference type="EMBL" id="AK311844">
    <property type="protein sequence ID" value="BAG34786.1"/>
    <property type="molecule type" value="mRNA"/>
</dbReference>
<dbReference type="EMBL" id="CR541879">
    <property type="protein sequence ID" value="CAG46677.1"/>
    <property type="molecule type" value="mRNA"/>
</dbReference>
<dbReference type="EMBL" id="AC103563">
    <property type="protein sequence ID" value="AAY24121.1"/>
    <property type="molecule type" value="Genomic_DNA"/>
</dbReference>
<dbReference type="EMBL" id="CH471219">
    <property type="protein sequence ID" value="EAX10705.1"/>
    <property type="molecule type" value="Genomic_DNA"/>
</dbReference>
<dbReference type="EMBL" id="BC000458">
    <property type="protein sequence ID" value="AAH00458.1"/>
    <property type="molecule type" value="mRNA"/>
</dbReference>
<dbReference type="EMBL" id="BC003006">
    <property type="protein sequence ID" value="AAH03006.1"/>
    <property type="molecule type" value="mRNA"/>
</dbReference>
<dbReference type="CCDS" id="CCDS2006.1">
    <molecule id="P21145-1"/>
</dbReference>
<dbReference type="CCDS" id="CCDS2007.1">
    <molecule id="P21145-2"/>
</dbReference>
<dbReference type="CCDS" id="CCDS2008.1">
    <molecule id="P21145-3"/>
</dbReference>
<dbReference type="CCDS" id="CCDS2009.1">
    <molecule id="P21145-4"/>
</dbReference>
<dbReference type="PIR" id="A29472">
    <property type="entry name" value="A29472"/>
</dbReference>
<dbReference type="RefSeq" id="NP_002362.1">
    <molecule id="P21145-1"/>
    <property type="nucleotide sequence ID" value="NM_002371.4"/>
</dbReference>
<dbReference type="RefSeq" id="NP_071883.1">
    <molecule id="P21145-2"/>
    <property type="nucleotide sequence ID" value="NM_022438.3"/>
</dbReference>
<dbReference type="RefSeq" id="NP_071884.1">
    <molecule id="P21145-3"/>
    <property type="nucleotide sequence ID" value="NM_022439.3"/>
</dbReference>
<dbReference type="RefSeq" id="NP_071885.1">
    <molecule id="P21145-4"/>
    <property type="nucleotide sequence ID" value="NM_022440.3"/>
</dbReference>
<dbReference type="SMR" id="P21145"/>
<dbReference type="BioGRID" id="110292">
    <property type="interactions" value="81"/>
</dbReference>
<dbReference type="CORUM" id="P21145"/>
<dbReference type="FunCoup" id="P21145">
    <property type="interactions" value="75"/>
</dbReference>
<dbReference type="IntAct" id="P21145">
    <property type="interactions" value="85"/>
</dbReference>
<dbReference type="MINT" id="P21145"/>
<dbReference type="STRING" id="9606.ENSP00000310880"/>
<dbReference type="TCDB" id="1.A.64.2.2">
    <property type="family name" value="the plasmolipin (plasmolipin) family"/>
</dbReference>
<dbReference type="BioMuta" id="MAL"/>
<dbReference type="DMDM" id="126719"/>
<dbReference type="PaxDb" id="9606-ENSP00000310880"/>
<dbReference type="PeptideAtlas" id="P21145"/>
<dbReference type="ProteomicsDB" id="53849">
    <molecule id="P21145-1"/>
</dbReference>
<dbReference type="ProteomicsDB" id="53851">
    <molecule id="P21145-3"/>
</dbReference>
<dbReference type="Antibodypedia" id="32290">
    <property type="antibodies" value="214 antibodies from 31 providers"/>
</dbReference>
<dbReference type="DNASU" id="4118"/>
<dbReference type="Ensembl" id="ENST00000309988.9">
    <molecule id="P21145-1"/>
    <property type="protein sequence ID" value="ENSP00000310880.4"/>
    <property type="gene ID" value="ENSG00000172005.11"/>
</dbReference>
<dbReference type="Ensembl" id="ENST00000349807.3">
    <molecule id="P21145-4"/>
    <property type="protein sequence ID" value="ENSP00000322860.3"/>
    <property type="gene ID" value="ENSG00000172005.11"/>
</dbReference>
<dbReference type="Ensembl" id="ENST00000353004.7">
    <molecule id="P21145-2"/>
    <property type="protein sequence ID" value="ENSP00000306568.4"/>
    <property type="gene ID" value="ENSG00000172005.11"/>
</dbReference>
<dbReference type="Ensembl" id="ENST00000354078.7">
    <molecule id="P21145-3"/>
    <property type="protein sequence ID" value="ENSP00000304924.3"/>
    <property type="gene ID" value="ENSG00000172005.11"/>
</dbReference>
<dbReference type="GeneID" id="4118"/>
<dbReference type="KEGG" id="hsa:4118"/>
<dbReference type="MANE-Select" id="ENST00000309988.9">
    <property type="protein sequence ID" value="ENSP00000310880.4"/>
    <property type="RefSeq nucleotide sequence ID" value="NM_002371.4"/>
    <property type="RefSeq protein sequence ID" value="NP_002362.1"/>
</dbReference>
<dbReference type="UCSC" id="uc002stx.3">
    <molecule id="P21145-1"/>
    <property type="organism name" value="human"/>
</dbReference>
<dbReference type="AGR" id="HGNC:6817"/>
<dbReference type="CTD" id="4118"/>
<dbReference type="DisGeNET" id="4118"/>
<dbReference type="GeneCards" id="MAL"/>
<dbReference type="HGNC" id="HGNC:6817">
    <property type="gene designation" value="MAL"/>
</dbReference>
<dbReference type="HPA" id="ENSG00000172005">
    <property type="expression patterns" value="Tissue enhanced (esophagus, vagina)"/>
</dbReference>
<dbReference type="MalaCards" id="MAL"/>
<dbReference type="MIM" id="188860">
    <property type="type" value="gene"/>
</dbReference>
<dbReference type="MIM" id="620978">
    <property type="type" value="phenotype"/>
</dbReference>
<dbReference type="neXtProt" id="NX_P21145"/>
<dbReference type="OpenTargets" id="ENSG00000172005"/>
<dbReference type="Orphanet" id="280270">
    <property type="disease" value="Pelizaeus-Merzbacher-like disease"/>
</dbReference>
<dbReference type="PharmGKB" id="PA30565"/>
<dbReference type="VEuPathDB" id="HostDB:ENSG00000172005"/>
<dbReference type="eggNOG" id="KOG4788">
    <property type="taxonomic scope" value="Eukaryota"/>
</dbReference>
<dbReference type="GeneTree" id="ENSGT00940000154987"/>
<dbReference type="HOGENOM" id="CLU_112950_0_0_1"/>
<dbReference type="InParanoid" id="P21145"/>
<dbReference type="OMA" id="YIINAHG"/>
<dbReference type="OrthoDB" id="9940869at2759"/>
<dbReference type="PAN-GO" id="P21145">
    <property type="GO annotations" value="3 GO annotations based on evolutionary models"/>
</dbReference>
<dbReference type="PhylomeDB" id="P21145"/>
<dbReference type="TreeFam" id="TF316174"/>
<dbReference type="PathwayCommons" id="P21145"/>
<dbReference type="SignaLink" id="P21145"/>
<dbReference type="SIGNOR" id="P21145"/>
<dbReference type="BioGRID-ORCS" id="4118">
    <property type="hits" value="18 hits in 1152 CRISPR screens"/>
</dbReference>
<dbReference type="ChiTaRS" id="MAL">
    <property type="organism name" value="human"/>
</dbReference>
<dbReference type="GeneWiki" id="MAL_(gene)"/>
<dbReference type="GenomeRNAi" id="4118"/>
<dbReference type="Pharos" id="P21145">
    <property type="development level" value="Tbio"/>
</dbReference>
<dbReference type="PRO" id="PR:P21145"/>
<dbReference type="Proteomes" id="UP000005640">
    <property type="component" value="Chromosome 2"/>
</dbReference>
<dbReference type="RNAct" id="P21145">
    <property type="molecule type" value="protein"/>
</dbReference>
<dbReference type="Bgee" id="ENSG00000172005">
    <property type="expression patterns" value="Expressed in esophagus squamous epithelium and 179 other cell types or tissues"/>
</dbReference>
<dbReference type="ExpressionAtlas" id="P21145">
    <property type="expression patterns" value="baseline and differential"/>
</dbReference>
<dbReference type="GO" id="GO:0016324">
    <property type="term" value="C:apical plasma membrane"/>
    <property type="evidence" value="ECO:0000304"/>
    <property type="project" value="UniProtKB"/>
</dbReference>
<dbReference type="GO" id="GO:0005783">
    <property type="term" value="C:endoplasmic reticulum"/>
    <property type="evidence" value="ECO:0000314"/>
    <property type="project" value="UniProtKB"/>
</dbReference>
<dbReference type="GO" id="GO:0120003">
    <property type="term" value="C:hinge region between urothelial plaques of apical plasma membrane"/>
    <property type="evidence" value="ECO:0007669"/>
    <property type="project" value="Ensembl"/>
</dbReference>
<dbReference type="GO" id="GO:0016020">
    <property type="term" value="C:membrane"/>
    <property type="evidence" value="ECO:0000318"/>
    <property type="project" value="GO_Central"/>
</dbReference>
<dbReference type="GO" id="GO:0045121">
    <property type="term" value="C:membrane raft"/>
    <property type="evidence" value="ECO:0000314"/>
    <property type="project" value="UniProtKB"/>
</dbReference>
<dbReference type="GO" id="GO:0044853">
    <property type="term" value="C:plasma membrane raft"/>
    <property type="evidence" value="ECO:0007669"/>
    <property type="project" value="Ensembl"/>
</dbReference>
<dbReference type="GO" id="GO:0043220">
    <property type="term" value="C:Schmidt-Lanterman incisure"/>
    <property type="evidence" value="ECO:0007669"/>
    <property type="project" value="Ensembl"/>
</dbReference>
<dbReference type="GO" id="GO:0008289">
    <property type="term" value="F:lipid binding"/>
    <property type="evidence" value="ECO:0000304"/>
    <property type="project" value="UniProtKB"/>
</dbReference>
<dbReference type="GO" id="GO:0016505">
    <property type="term" value="F:peptidase activator activity involved in apoptotic process"/>
    <property type="evidence" value="ECO:0000303"/>
    <property type="project" value="UniProtKB"/>
</dbReference>
<dbReference type="GO" id="GO:0019911">
    <property type="term" value="F:structural constituent of myelin sheath"/>
    <property type="evidence" value="ECO:0000314"/>
    <property type="project" value="UniProtKB"/>
</dbReference>
<dbReference type="GO" id="GO:0045176">
    <property type="term" value="P:apical protein localization"/>
    <property type="evidence" value="ECO:0000304"/>
    <property type="project" value="UniProtKB"/>
</dbReference>
<dbReference type="GO" id="GO:0006915">
    <property type="term" value="P:apoptotic process"/>
    <property type="evidence" value="ECO:0000303"/>
    <property type="project" value="UniProtKB"/>
</dbReference>
<dbReference type="GO" id="GO:0030154">
    <property type="term" value="P:cell differentiation"/>
    <property type="evidence" value="ECO:0000304"/>
    <property type="project" value="UniProtKB"/>
</dbReference>
<dbReference type="GO" id="GO:0007417">
    <property type="term" value="P:central nervous system development"/>
    <property type="evidence" value="ECO:0000304"/>
    <property type="project" value="UniProtKB"/>
</dbReference>
<dbReference type="GO" id="GO:0022010">
    <property type="term" value="P:central nervous system myelination"/>
    <property type="evidence" value="ECO:0007669"/>
    <property type="project" value="Ensembl"/>
</dbReference>
<dbReference type="GO" id="GO:0001766">
    <property type="term" value="P:membrane raft polarization"/>
    <property type="evidence" value="ECO:0000304"/>
    <property type="project" value="UniProtKB"/>
</dbReference>
<dbReference type="GO" id="GO:0042552">
    <property type="term" value="P:myelination"/>
    <property type="evidence" value="ECO:0000318"/>
    <property type="project" value="GO_Central"/>
</dbReference>
<dbReference type="GO" id="GO:1902043">
    <property type="term" value="P:positive regulation of extrinsic apoptotic signaling pathway via death domain receptors"/>
    <property type="evidence" value="ECO:0007669"/>
    <property type="project" value="Ensembl"/>
</dbReference>
<dbReference type="GO" id="GO:0098737">
    <property type="term" value="P:protein insertion into plasma membrane"/>
    <property type="evidence" value="ECO:0000315"/>
    <property type="project" value="UniProtKB"/>
</dbReference>
<dbReference type="GO" id="GO:0002175">
    <property type="term" value="P:protein localization to paranode region of axon"/>
    <property type="evidence" value="ECO:0007669"/>
    <property type="project" value="Ensembl"/>
</dbReference>
<dbReference type="InterPro" id="IPR013295">
    <property type="entry name" value="MAL"/>
</dbReference>
<dbReference type="InterPro" id="IPR008253">
    <property type="entry name" value="Marvel"/>
</dbReference>
<dbReference type="InterPro" id="IPR050578">
    <property type="entry name" value="MARVEL-CKLF_proteins"/>
</dbReference>
<dbReference type="PANTHER" id="PTHR22776">
    <property type="entry name" value="MARVEL-CONTAINING POTENTIAL LIPID RAFT-ASSOCIATED PROTEIN"/>
    <property type="match status" value="1"/>
</dbReference>
<dbReference type="PANTHER" id="PTHR22776:SF12">
    <property type="entry name" value="MYELIN AND LYMPHOCYTE PROTEIN"/>
    <property type="match status" value="1"/>
</dbReference>
<dbReference type="Pfam" id="PF01284">
    <property type="entry name" value="MARVEL"/>
    <property type="match status" value="1"/>
</dbReference>
<dbReference type="PRINTS" id="PR01884">
    <property type="entry name" value="MALPROTEIN"/>
</dbReference>
<dbReference type="PROSITE" id="PS51225">
    <property type="entry name" value="MARVEL"/>
    <property type="match status" value="1"/>
</dbReference>
<proteinExistence type="evidence at protein level"/>
<gene>
    <name type="primary">MAL</name>
</gene>
<feature type="chain" id="PRO_0000156805" description="Myelin and lymphocyte protein">
    <location>
        <begin position="1"/>
        <end position="153"/>
    </location>
</feature>
<feature type="topological domain" description="Cytoplasmic" evidence="2">
    <location>
        <begin position="1"/>
        <end position="24"/>
    </location>
</feature>
<feature type="transmembrane region" description="Helical" evidence="2">
    <location>
        <begin position="25"/>
        <end position="46"/>
    </location>
</feature>
<feature type="topological domain" description="Extracellular" evidence="2">
    <location>
        <begin position="47"/>
        <end position="53"/>
    </location>
</feature>
<feature type="transmembrane region" description="Helical" evidence="2">
    <location>
        <begin position="54"/>
        <end position="75"/>
    </location>
</feature>
<feature type="topological domain" description="Cytoplasmic" evidence="2">
    <location>
        <begin position="76"/>
        <end position="92"/>
    </location>
</feature>
<feature type="transmembrane region" description="Helical" evidence="2">
    <location>
        <begin position="93"/>
        <end position="114"/>
    </location>
</feature>
<feature type="topological domain" description="Extracellular" evidence="2">
    <location>
        <begin position="115"/>
        <end position="125"/>
    </location>
</feature>
<feature type="transmembrane region" description="Helical" evidence="2">
    <location>
        <begin position="126"/>
        <end position="147"/>
    </location>
</feature>
<feature type="topological domain" description="Cytoplasmic" evidence="2">
    <location>
        <begin position="148"/>
        <end position="153"/>
    </location>
</feature>
<feature type="domain" description="MARVEL" evidence="3">
    <location>
        <begin position="18"/>
        <end position="151"/>
    </location>
</feature>
<feature type="splice variant" id="VSP_003162" description="In isoform D." evidence="5">
    <location>
        <begin position="32"/>
        <end position="129"/>
    </location>
</feature>
<feature type="splice variant" id="VSP_003163" description="In isoform C." evidence="5">
    <location>
        <begin position="32"/>
        <end position="87"/>
    </location>
</feature>
<feature type="splice variant" id="VSP_003164" description="In isoform B." evidence="5">
    <location>
        <begin position="88"/>
        <end position="129"/>
    </location>
</feature>
<feature type="sequence variant" id="VAR_090116" description="In HLD28; uncertain significance; decreased interaction with PLP1; mislocalized to the endoplasmic reticulum." evidence="4">
    <original>A</original>
    <variation>D</variation>
    <location>
        <position position="109"/>
    </location>
</feature>
<organism>
    <name type="scientific">Homo sapiens</name>
    <name type="common">Human</name>
    <dbReference type="NCBI Taxonomy" id="9606"/>
    <lineage>
        <taxon>Eukaryota</taxon>
        <taxon>Metazoa</taxon>
        <taxon>Chordata</taxon>
        <taxon>Craniata</taxon>
        <taxon>Vertebrata</taxon>
        <taxon>Euteleostomi</taxon>
        <taxon>Mammalia</taxon>
        <taxon>Eutheria</taxon>
        <taxon>Euarchontoglires</taxon>
        <taxon>Primates</taxon>
        <taxon>Haplorrhini</taxon>
        <taxon>Catarrhini</taxon>
        <taxon>Hominidae</taxon>
        <taxon>Homo</taxon>
    </lineage>
</organism>
<protein>
    <recommendedName>
        <fullName>Myelin and lymphocyte protein</fullName>
    </recommendedName>
    <alternativeName>
        <fullName>T-lymphocyte maturation-associated protein</fullName>
    </alternativeName>
</protein>
<sequence>MAPAAATGGSTLPSGFSVFTTLPDLLFIFEFIFGGLVWILVASSLVPWPLVQGWVMFVSVFCFVATTTLIILYIIGAHGGETSWVTLDAAYHCTAALFYLSASVLEALATITMQDGFTYRHYHENIAAVVFSYIATLLYVVHAVFSLIRWKSS</sequence>
<evidence type="ECO:0000250" key="1">
    <source>
        <dbReference type="UniProtKB" id="O09198"/>
    </source>
</evidence>
<evidence type="ECO:0000255" key="2"/>
<evidence type="ECO:0000255" key="3">
    <source>
        <dbReference type="PROSITE-ProRule" id="PRU00581"/>
    </source>
</evidence>
<evidence type="ECO:0000269" key="4">
    <source>
    </source>
</evidence>
<evidence type="ECO:0000305" key="5"/>